<dbReference type="EMBL" id="AE009950">
    <property type="protein sequence ID" value="AAL80379.1"/>
    <property type="molecule type" value="Genomic_DNA"/>
</dbReference>
<dbReference type="RefSeq" id="WP_011011370.1">
    <property type="nucleotide sequence ID" value="NZ_CP023154.1"/>
</dbReference>
<dbReference type="PDB" id="1RYQ">
    <property type="method" value="X-ray"/>
    <property type="resolution" value="1.38 A"/>
    <property type="chains" value="A=2-61"/>
</dbReference>
<dbReference type="PDB" id="3P8B">
    <property type="method" value="X-ray"/>
    <property type="resolution" value="1.80 A"/>
    <property type="chains" value="A/C=1-61"/>
</dbReference>
<dbReference type="PDB" id="3QQC">
    <property type="method" value="X-ray"/>
    <property type="resolution" value="3.30 A"/>
    <property type="chains" value="E=1-61"/>
</dbReference>
<dbReference type="PDB" id="8OKI">
    <property type="method" value="EM"/>
    <property type="resolution" value="3.45 A"/>
    <property type="chains" value="I=1-61"/>
</dbReference>
<dbReference type="PDB" id="8P2I">
    <property type="method" value="EM"/>
    <property type="resolution" value="3.40 A"/>
    <property type="chains" value="I=1-61"/>
</dbReference>
<dbReference type="PDBsum" id="1RYQ"/>
<dbReference type="PDBsum" id="3P8B"/>
<dbReference type="PDBsum" id="3QQC"/>
<dbReference type="PDBsum" id="8OKI"/>
<dbReference type="PDBsum" id="8P2I"/>
<dbReference type="EMDB" id="EMD-16929"/>
<dbReference type="EMDB" id="EMD-17366"/>
<dbReference type="SMR" id="Q8U440"/>
<dbReference type="DIP" id="DIP-59595N"/>
<dbReference type="IntAct" id="Q8U440">
    <property type="interactions" value="2"/>
</dbReference>
<dbReference type="MINT" id="Q8U440"/>
<dbReference type="STRING" id="186497.PF0255"/>
<dbReference type="PaxDb" id="186497-PF0255"/>
<dbReference type="GeneID" id="41712045"/>
<dbReference type="KEGG" id="pfu:PF0255"/>
<dbReference type="PATRIC" id="fig|186497.12.peg.267"/>
<dbReference type="eggNOG" id="arCOG04077">
    <property type="taxonomic scope" value="Archaea"/>
</dbReference>
<dbReference type="HOGENOM" id="CLU_199467_0_0_2"/>
<dbReference type="OrthoDB" id="275101at2157"/>
<dbReference type="PhylomeDB" id="Q8U440"/>
<dbReference type="EvolutionaryTrace" id="Q8U440"/>
<dbReference type="Proteomes" id="UP000001013">
    <property type="component" value="Chromosome"/>
</dbReference>
<dbReference type="GO" id="GO:0008270">
    <property type="term" value="F:zinc ion binding"/>
    <property type="evidence" value="ECO:0007669"/>
    <property type="project" value="UniProtKB-UniRule"/>
</dbReference>
<dbReference type="GO" id="GO:0006355">
    <property type="term" value="P:regulation of DNA-templated transcription"/>
    <property type="evidence" value="ECO:0007669"/>
    <property type="project" value="UniProtKB-UniRule"/>
</dbReference>
<dbReference type="Gene3D" id="2.20.28.90">
    <property type="match status" value="1"/>
</dbReference>
<dbReference type="HAMAP" id="MF_00949">
    <property type="entry name" value="Spt4_arch"/>
    <property type="match status" value="1"/>
</dbReference>
<dbReference type="InterPro" id="IPR029040">
    <property type="entry name" value="RPABC4/Spt4"/>
</dbReference>
<dbReference type="InterPro" id="IPR022800">
    <property type="entry name" value="Spt4/RpoE2_Znf"/>
</dbReference>
<dbReference type="InterPro" id="IPR007178">
    <property type="entry name" value="Spt4_arch"/>
</dbReference>
<dbReference type="InterPro" id="IPR038589">
    <property type="entry name" value="Spt4_dom_sf"/>
</dbReference>
<dbReference type="NCBIfam" id="NF006224">
    <property type="entry name" value="PRK08351.1"/>
    <property type="match status" value="1"/>
</dbReference>
<dbReference type="NCBIfam" id="NF041664">
    <property type="entry name" value="RNAP_arch_Epp"/>
    <property type="match status" value="1"/>
</dbReference>
<dbReference type="PANTHER" id="PTHR40704">
    <property type="entry name" value="TRANSCRIPTION ELONGATION FACTOR SPT4"/>
    <property type="match status" value="1"/>
</dbReference>
<dbReference type="PANTHER" id="PTHR40704:SF1">
    <property type="entry name" value="TRANSCRIPTION ELONGATION FACTOR SPT4"/>
    <property type="match status" value="1"/>
</dbReference>
<dbReference type="Pfam" id="PF06093">
    <property type="entry name" value="Spt4"/>
    <property type="match status" value="1"/>
</dbReference>
<dbReference type="SMART" id="SM01389">
    <property type="entry name" value="Spt4"/>
    <property type="match status" value="1"/>
</dbReference>
<dbReference type="SUPFAM" id="SSF63393">
    <property type="entry name" value="RNA polymerase subunits"/>
    <property type="match status" value="1"/>
</dbReference>
<comment type="function">
    <text evidence="1 2 3">Stimulates transcription elongation.</text>
</comment>
<comment type="subunit">
    <text evidence="1 2 3">Heterodimer composed of Spt4 and Spt5.</text>
</comment>
<comment type="interaction">
    <interactant intactId="EBI-8606370">
        <id>Q8U440</id>
    </interactant>
    <interactant intactId="EBI-8606402">
        <id>Q8TZK1</id>
        <label>spt5</label>
    </interactant>
    <organismsDiffer>false</organismsDiffer>
    <experiments>3</experiments>
</comment>
<comment type="domain">
    <text evidence="2 3">Contains a N-terminal zinc-binding domain and a C-terminal NGN-binding domain.</text>
</comment>
<comment type="similarity">
    <text evidence="1">Belongs to the archaeal Spt4 family.</text>
</comment>
<feature type="chain" id="PRO_0000422131" description="Transcription elongation factor Spt4">
    <location>
        <begin position="1"/>
        <end position="61"/>
    </location>
</feature>
<feature type="binding site" evidence="1 2 3">
    <location>
        <position position="6"/>
    </location>
    <ligand>
        <name>Zn(2+)</name>
        <dbReference type="ChEBI" id="CHEBI:29105"/>
    </ligand>
</feature>
<feature type="binding site" evidence="1 2 3">
    <location>
        <position position="9"/>
    </location>
    <ligand>
        <name>Zn(2+)</name>
        <dbReference type="ChEBI" id="CHEBI:29105"/>
    </ligand>
</feature>
<feature type="binding site" evidence="1 2 3">
    <location>
        <position position="18"/>
    </location>
    <ligand>
        <name>Zn(2+)</name>
        <dbReference type="ChEBI" id="CHEBI:29105"/>
    </ligand>
</feature>
<feature type="binding site" evidence="1 2 3">
    <location>
        <position position="21"/>
    </location>
    <ligand>
        <name>Zn(2+)</name>
        <dbReference type="ChEBI" id="CHEBI:29105"/>
    </ligand>
</feature>
<feature type="strand" evidence="4">
    <location>
        <begin position="4"/>
        <end position="6"/>
    </location>
</feature>
<feature type="turn" evidence="4">
    <location>
        <begin position="7"/>
        <end position="9"/>
    </location>
</feature>
<feature type="strand" evidence="4">
    <location>
        <begin position="11"/>
        <end position="17"/>
    </location>
</feature>
<feature type="turn" evidence="4">
    <location>
        <begin position="19"/>
        <end position="21"/>
    </location>
</feature>
<feature type="strand" evidence="4">
    <location>
        <begin position="26"/>
        <end position="28"/>
    </location>
</feature>
<feature type="strand" evidence="4">
    <location>
        <begin position="30"/>
        <end position="37"/>
    </location>
</feature>
<feature type="helix" evidence="4">
    <location>
        <begin position="39"/>
        <end position="41"/>
    </location>
</feature>
<feature type="helix" evidence="4">
    <location>
        <begin position="43"/>
        <end position="48"/>
    </location>
</feature>
<feature type="strand" evidence="4">
    <location>
        <begin position="54"/>
        <end position="60"/>
    </location>
</feature>
<name>SPT4_PYRFU</name>
<organism>
    <name type="scientific">Pyrococcus furiosus (strain ATCC 43587 / DSM 3638 / JCM 8422 / Vc1)</name>
    <dbReference type="NCBI Taxonomy" id="186497"/>
    <lineage>
        <taxon>Archaea</taxon>
        <taxon>Methanobacteriati</taxon>
        <taxon>Methanobacteriota</taxon>
        <taxon>Thermococci</taxon>
        <taxon>Thermococcales</taxon>
        <taxon>Thermococcaceae</taxon>
        <taxon>Pyrococcus</taxon>
    </lineage>
</organism>
<proteinExistence type="evidence at protein level"/>
<gene>
    <name evidence="1" type="primary">spt4</name>
    <name type="ordered locus">PF0255</name>
</gene>
<evidence type="ECO:0000255" key="1">
    <source>
        <dbReference type="HAMAP-Rule" id="MF_00949"/>
    </source>
</evidence>
<evidence type="ECO:0000269" key="2">
    <source>
    </source>
</evidence>
<evidence type="ECO:0000269" key="3">
    <source>
    </source>
</evidence>
<evidence type="ECO:0007829" key="4">
    <source>
        <dbReference type="PDB" id="1RYQ"/>
    </source>
</evidence>
<accession>Q8U440</accession>
<reference key="1">
    <citation type="journal article" date="1999" name="Genetics">
        <title>Divergence of the hyperthermophilic archaea Pyrococcus furiosus and P. horikoshii inferred from complete genomic sequences.</title>
        <authorList>
            <person name="Maeder D.L."/>
            <person name="Weiss R.B."/>
            <person name="Dunn D.M."/>
            <person name="Cherry J.L."/>
            <person name="Gonzalez J.M."/>
            <person name="DiRuggiero J."/>
            <person name="Robb F.T."/>
        </authorList>
    </citation>
    <scope>NUCLEOTIDE SEQUENCE [LARGE SCALE GENOMIC DNA]</scope>
    <source>
        <strain>ATCC 43587 / DSM 3638 / JCM 8422 / Vc1</strain>
    </source>
</reference>
<reference key="2">
    <citation type="journal article" date="2005" name="Acta Crystallogr. D">
        <title>Parameter-space screening: a powerful tool for high-throughput crystal structure determination.</title>
        <authorList>
            <person name="Liu Z.J."/>
            <person name="Lin D."/>
            <person name="Tempel W."/>
            <person name="Praissman J.L."/>
            <person name="Rose J.P."/>
            <person name="Wang B.C."/>
        </authorList>
    </citation>
    <scope>X-RAY CRYSTALLOGRAPHY (1.38 ANGSTROMS) OF 2-61</scope>
</reference>
<reference key="3">
    <citation type="journal article" date="2011" name="EMBO J.">
        <title>Architecture of the RNA polymerase-Spt4/5 complex and basis of universal transcription processivity.</title>
        <authorList>
            <person name="Martinez-Rucobo F.W."/>
            <person name="Sainsbury S."/>
            <person name="Cheung A.C."/>
            <person name="Cramer P."/>
        </authorList>
    </citation>
    <scope>X-RAY CRYSTALLOGRAPHY (3.30 ANGSTROMS) IN COMPLEX WITH SPT5; RNAP AND ZINC</scope>
    <scope>FUNCTION</scope>
    <scope>SUBUNIT</scope>
    <scope>DOMAIN</scope>
</reference>
<reference key="4">
    <citation type="journal article" date="2011" name="Proc. Natl. Acad. Sci. U.S.A.">
        <title>RNA polymerase and transcription elongation factor Spt4/5 complex structure.</title>
        <authorList>
            <person name="Klein B.J."/>
            <person name="Bose D."/>
            <person name="Baker K.J."/>
            <person name="Yusoff Z.M."/>
            <person name="Zhang X."/>
            <person name="Murakami K.S."/>
        </authorList>
    </citation>
    <scope>X-RAY CRYSTALLOGRAPHY (1.80 ANGSTROMS) IN COMPLEX WITH SPT5 AND ZINC</scope>
    <scope>FUNCTION</scope>
    <scope>SUBUNIT</scope>
    <scope>DOMAIN</scope>
</reference>
<protein>
    <recommendedName>
        <fullName evidence="1">Transcription elongation factor Spt4</fullName>
    </recommendedName>
</protein>
<sequence>MSEKACRHCHYITSEDRCPVCGSRDLSEEWFDLVIIVDVENSEIAKKIGAKVPGKYAIRVR</sequence>
<keyword id="KW-0002">3D-structure</keyword>
<keyword id="KW-0479">Metal-binding</keyword>
<keyword id="KW-1185">Reference proteome</keyword>
<keyword id="KW-0804">Transcription</keyword>
<keyword id="KW-0805">Transcription regulation</keyword>
<keyword id="KW-0862">Zinc</keyword>